<proteinExistence type="inferred from homology"/>
<name>KTHY_STRTD</name>
<dbReference type="EC" id="2.7.4.9" evidence="1"/>
<dbReference type="EMBL" id="CP000419">
    <property type="protein sequence ID" value="ABJ65804.1"/>
    <property type="molecule type" value="Genomic_DNA"/>
</dbReference>
<dbReference type="RefSeq" id="WP_002946312.1">
    <property type="nucleotide sequence ID" value="NZ_CP086001.1"/>
</dbReference>
<dbReference type="SMR" id="Q03LW8"/>
<dbReference type="GeneID" id="66898399"/>
<dbReference type="KEGG" id="ste:STER_0526"/>
<dbReference type="HOGENOM" id="CLU_049131_0_2_9"/>
<dbReference type="GO" id="GO:0005829">
    <property type="term" value="C:cytosol"/>
    <property type="evidence" value="ECO:0007669"/>
    <property type="project" value="TreeGrafter"/>
</dbReference>
<dbReference type="GO" id="GO:0005524">
    <property type="term" value="F:ATP binding"/>
    <property type="evidence" value="ECO:0007669"/>
    <property type="project" value="UniProtKB-UniRule"/>
</dbReference>
<dbReference type="GO" id="GO:0004798">
    <property type="term" value="F:dTMP kinase activity"/>
    <property type="evidence" value="ECO:0007669"/>
    <property type="project" value="UniProtKB-UniRule"/>
</dbReference>
<dbReference type="GO" id="GO:0006233">
    <property type="term" value="P:dTDP biosynthetic process"/>
    <property type="evidence" value="ECO:0007669"/>
    <property type="project" value="InterPro"/>
</dbReference>
<dbReference type="GO" id="GO:0006235">
    <property type="term" value="P:dTTP biosynthetic process"/>
    <property type="evidence" value="ECO:0007669"/>
    <property type="project" value="UniProtKB-UniRule"/>
</dbReference>
<dbReference type="GO" id="GO:0006227">
    <property type="term" value="P:dUDP biosynthetic process"/>
    <property type="evidence" value="ECO:0007669"/>
    <property type="project" value="TreeGrafter"/>
</dbReference>
<dbReference type="CDD" id="cd01672">
    <property type="entry name" value="TMPK"/>
    <property type="match status" value="1"/>
</dbReference>
<dbReference type="FunFam" id="3.40.50.300:FF:000225">
    <property type="entry name" value="Thymidylate kinase"/>
    <property type="match status" value="1"/>
</dbReference>
<dbReference type="Gene3D" id="3.40.50.300">
    <property type="entry name" value="P-loop containing nucleotide triphosphate hydrolases"/>
    <property type="match status" value="1"/>
</dbReference>
<dbReference type="HAMAP" id="MF_00165">
    <property type="entry name" value="Thymidylate_kinase"/>
    <property type="match status" value="1"/>
</dbReference>
<dbReference type="InterPro" id="IPR027417">
    <property type="entry name" value="P-loop_NTPase"/>
</dbReference>
<dbReference type="InterPro" id="IPR039430">
    <property type="entry name" value="Thymidylate_kin-like_dom"/>
</dbReference>
<dbReference type="InterPro" id="IPR018095">
    <property type="entry name" value="Thymidylate_kin_CS"/>
</dbReference>
<dbReference type="InterPro" id="IPR018094">
    <property type="entry name" value="Thymidylate_kinase"/>
</dbReference>
<dbReference type="NCBIfam" id="TIGR00041">
    <property type="entry name" value="DTMP_kinase"/>
    <property type="match status" value="1"/>
</dbReference>
<dbReference type="PANTHER" id="PTHR10344">
    <property type="entry name" value="THYMIDYLATE KINASE"/>
    <property type="match status" value="1"/>
</dbReference>
<dbReference type="PANTHER" id="PTHR10344:SF4">
    <property type="entry name" value="UMP-CMP KINASE 2, MITOCHONDRIAL"/>
    <property type="match status" value="1"/>
</dbReference>
<dbReference type="Pfam" id="PF02223">
    <property type="entry name" value="Thymidylate_kin"/>
    <property type="match status" value="1"/>
</dbReference>
<dbReference type="SUPFAM" id="SSF52540">
    <property type="entry name" value="P-loop containing nucleoside triphosphate hydrolases"/>
    <property type="match status" value="1"/>
</dbReference>
<dbReference type="PROSITE" id="PS01331">
    <property type="entry name" value="THYMIDYLATE_KINASE"/>
    <property type="match status" value="1"/>
</dbReference>
<protein>
    <recommendedName>
        <fullName evidence="1">Thymidylate kinase</fullName>
        <ecNumber evidence="1">2.7.4.9</ecNumber>
    </recommendedName>
    <alternativeName>
        <fullName evidence="1">dTMP kinase</fullName>
    </alternativeName>
</protein>
<gene>
    <name evidence="1" type="primary">tmk</name>
    <name type="ordered locus">STER_0526</name>
</gene>
<comment type="function">
    <text evidence="1">Phosphorylation of dTMP to form dTDP in both de novo and salvage pathways of dTTP synthesis.</text>
</comment>
<comment type="catalytic activity">
    <reaction evidence="1">
        <text>dTMP + ATP = dTDP + ADP</text>
        <dbReference type="Rhea" id="RHEA:13517"/>
        <dbReference type="ChEBI" id="CHEBI:30616"/>
        <dbReference type="ChEBI" id="CHEBI:58369"/>
        <dbReference type="ChEBI" id="CHEBI:63528"/>
        <dbReference type="ChEBI" id="CHEBI:456216"/>
        <dbReference type="EC" id="2.7.4.9"/>
    </reaction>
</comment>
<comment type="similarity">
    <text evidence="1">Belongs to the thymidylate kinase family.</text>
</comment>
<keyword id="KW-0067">ATP-binding</keyword>
<keyword id="KW-0418">Kinase</keyword>
<keyword id="KW-0545">Nucleotide biosynthesis</keyword>
<keyword id="KW-0547">Nucleotide-binding</keyword>
<keyword id="KW-0808">Transferase</keyword>
<feature type="chain" id="PRO_1000023299" description="Thymidylate kinase">
    <location>
        <begin position="1"/>
        <end position="209"/>
    </location>
</feature>
<feature type="binding site" evidence="1">
    <location>
        <begin position="11"/>
        <end position="18"/>
    </location>
    <ligand>
        <name>ATP</name>
        <dbReference type="ChEBI" id="CHEBI:30616"/>
    </ligand>
</feature>
<sequence length="209" mass="23411">MSKGLLISIEGPDGAGKTSVLKVLLPRLREVYPAQVITTREPGGVAIAEQIREVILDIDNTAMDAKTELLLYIAARRQHLVEKVLPELENGNMVIMDRFIDSSVAYQGAGRGLDQDEVAWLNNYATDGHKPDLTLLFDVDSETGLARIAANGEREVNRLDLEKLDMHQRVRQGYLDLAEAEPERIKRIDASQTLEEVVEDTWEIIKSYL</sequence>
<organism>
    <name type="scientific">Streptococcus thermophilus (strain ATCC BAA-491 / LMD-9)</name>
    <dbReference type="NCBI Taxonomy" id="322159"/>
    <lineage>
        <taxon>Bacteria</taxon>
        <taxon>Bacillati</taxon>
        <taxon>Bacillota</taxon>
        <taxon>Bacilli</taxon>
        <taxon>Lactobacillales</taxon>
        <taxon>Streptococcaceae</taxon>
        <taxon>Streptococcus</taxon>
    </lineage>
</organism>
<accession>Q03LW8</accession>
<evidence type="ECO:0000255" key="1">
    <source>
        <dbReference type="HAMAP-Rule" id="MF_00165"/>
    </source>
</evidence>
<reference key="1">
    <citation type="journal article" date="2006" name="Proc. Natl. Acad. Sci. U.S.A.">
        <title>Comparative genomics of the lactic acid bacteria.</title>
        <authorList>
            <person name="Makarova K.S."/>
            <person name="Slesarev A."/>
            <person name="Wolf Y.I."/>
            <person name="Sorokin A."/>
            <person name="Mirkin B."/>
            <person name="Koonin E.V."/>
            <person name="Pavlov A."/>
            <person name="Pavlova N."/>
            <person name="Karamychev V."/>
            <person name="Polouchine N."/>
            <person name="Shakhova V."/>
            <person name="Grigoriev I."/>
            <person name="Lou Y."/>
            <person name="Rohksar D."/>
            <person name="Lucas S."/>
            <person name="Huang K."/>
            <person name="Goodstein D.M."/>
            <person name="Hawkins T."/>
            <person name="Plengvidhya V."/>
            <person name="Welker D."/>
            <person name="Hughes J."/>
            <person name="Goh Y."/>
            <person name="Benson A."/>
            <person name="Baldwin K."/>
            <person name="Lee J.-H."/>
            <person name="Diaz-Muniz I."/>
            <person name="Dosti B."/>
            <person name="Smeianov V."/>
            <person name="Wechter W."/>
            <person name="Barabote R."/>
            <person name="Lorca G."/>
            <person name="Altermann E."/>
            <person name="Barrangou R."/>
            <person name="Ganesan B."/>
            <person name="Xie Y."/>
            <person name="Rawsthorne H."/>
            <person name="Tamir D."/>
            <person name="Parker C."/>
            <person name="Breidt F."/>
            <person name="Broadbent J.R."/>
            <person name="Hutkins R."/>
            <person name="O'Sullivan D."/>
            <person name="Steele J."/>
            <person name="Unlu G."/>
            <person name="Saier M.H. Jr."/>
            <person name="Klaenhammer T."/>
            <person name="Richardson P."/>
            <person name="Kozyavkin S."/>
            <person name="Weimer B.C."/>
            <person name="Mills D.A."/>
        </authorList>
    </citation>
    <scope>NUCLEOTIDE SEQUENCE [LARGE SCALE GENOMIC DNA]</scope>
    <source>
        <strain>ATCC BAA-491 / LMD-9</strain>
    </source>
</reference>